<dbReference type="EC" id="5.4.99.12" evidence="1"/>
<dbReference type="EMBL" id="BX571658">
    <property type="protein sequence ID" value="CAE09804.1"/>
    <property type="status" value="ALT_INIT"/>
    <property type="molecule type" value="Genomic_DNA"/>
</dbReference>
<dbReference type="RefSeq" id="WP_041572025.1">
    <property type="nucleotide sequence ID" value="NC_005090.1"/>
</dbReference>
<dbReference type="SMR" id="Q7M9U3"/>
<dbReference type="STRING" id="273121.WS0676"/>
<dbReference type="KEGG" id="wsu:WS0676"/>
<dbReference type="eggNOG" id="COG0101">
    <property type="taxonomic scope" value="Bacteria"/>
</dbReference>
<dbReference type="HOGENOM" id="CLU_014673_0_1_7"/>
<dbReference type="Proteomes" id="UP000000422">
    <property type="component" value="Chromosome"/>
</dbReference>
<dbReference type="GO" id="GO:0003723">
    <property type="term" value="F:RNA binding"/>
    <property type="evidence" value="ECO:0007669"/>
    <property type="project" value="InterPro"/>
</dbReference>
<dbReference type="GO" id="GO:0160147">
    <property type="term" value="F:tRNA pseudouridine(38-40) synthase activity"/>
    <property type="evidence" value="ECO:0007669"/>
    <property type="project" value="UniProtKB-EC"/>
</dbReference>
<dbReference type="GO" id="GO:0031119">
    <property type="term" value="P:tRNA pseudouridine synthesis"/>
    <property type="evidence" value="ECO:0007669"/>
    <property type="project" value="UniProtKB-UniRule"/>
</dbReference>
<dbReference type="CDD" id="cd02570">
    <property type="entry name" value="PseudoU_synth_EcTruA"/>
    <property type="match status" value="1"/>
</dbReference>
<dbReference type="Gene3D" id="3.30.70.660">
    <property type="entry name" value="Pseudouridine synthase I, catalytic domain, C-terminal subdomain"/>
    <property type="match status" value="1"/>
</dbReference>
<dbReference type="Gene3D" id="3.30.70.580">
    <property type="entry name" value="Pseudouridine synthase I, catalytic domain, N-terminal subdomain"/>
    <property type="match status" value="1"/>
</dbReference>
<dbReference type="HAMAP" id="MF_00171">
    <property type="entry name" value="TruA"/>
    <property type="match status" value="1"/>
</dbReference>
<dbReference type="InterPro" id="IPR020103">
    <property type="entry name" value="PsdUridine_synth_cat_dom_sf"/>
</dbReference>
<dbReference type="InterPro" id="IPR001406">
    <property type="entry name" value="PsdUridine_synth_TruA"/>
</dbReference>
<dbReference type="InterPro" id="IPR020097">
    <property type="entry name" value="PsdUridine_synth_TruA_a/b_dom"/>
</dbReference>
<dbReference type="InterPro" id="IPR020095">
    <property type="entry name" value="PsdUridine_synth_TruA_C"/>
</dbReference>
<dbReference type="InterPro" id="IPR020094">
    <property type="entry name" value="TruA/RsuA/RluB/E/F_N"/>
</dbReference>
<dbReference type="NCBIfam" id="TIGR00071">
    <property type="entry name" value="hisT_truA"/>
    <property type="match status" value="1"/>
</dbReference>
<dbReference type="PANTHER" id="PTHR11142">
    <property type="entry name" value="PSEUDOURIDYLATE SYNTHASE"/>
    <property type="match status" value="1"/>
</dbReference>
<dbReference type="PANTHER" id="PTHR11142:SF0">
    <property type="entry name" value="TRNA PSEUDOURIDINE SYNTHASE-LIKE 1"/>
    <property type="match status" value="1"/>
</dbReference>
<dbReference type="Pfam" id="PF01416">
    <property type="entry name" value="PseudoU_synth_1"/>
    <property type="match status" value="1"/>
</dbReference>
<dbReference type="PIRSF" id="PIRSF001430">
    <property type="entry name" value="tRNA_psdUrid_synth"/>
    <property type="match status" value="1"/>
</dbReference>
<dbReference type="SUPFAM" id="SSF55120">
    <property type="entry name" value="Pseudouridine synthase"/>
    <property type="match status" value="1"/>
</dbReference>
<reference key="1">
    <citation type="journal article" date="2003" name="Proc. Natl. Acad. Sci. U.S.A.">
        <title>Complete genome sequence and analysis of Wolinella succinogenes.</title>
        <authorList>
            <person name="Baar C."/>
            <person name="Eppinger M."/>
            <person name="Raddatz G."/>
            <person name="Simon J."/>
            <person name="Lanz C."/>
            <person name="Klimmek O."/>
            <person name="Nandakumar R."/>
            <person name="Gross R."/>
            <person name="Rosinus A."/>
            <person name="Keller H."/>
            <person name="Jagtap P."/>
            <person name="Linke B."/>
            <person name="Meyer F."/>
            <person name="Lederer H."/>
            <person name="Schuster S.C."/>
        </authorList>
    </citation>
    <scope>NUCLEOTIDE SEQUENCE [LARGE SCALE GENOMIC DNA]</scope>
    <source>
        <strain>ATCC 29543 / DSM 1740 / CCUG 13145 / JCM 31913 / LMG 7466 / NCTC 11488 / FDC 602W</strain>
    </source>
</reference>
<gene>
    <name evidence="1" type="primary">truA</name>
    <name type="ordered locus">WS0676</name>
</gene>
<keyword id="KW-0413">Isomerase</keyword>
<keyword id="KW-1185">Reference proteome</keyword>
<keyword id="KW-0819">tRNA processing</keyword>
<proteinExistence type="inferred from homology"/>
<evidence type="ECO:0000255" key="1">
    <source>
        <dbReference type="HAMAP-Rule" id="MF_00171"/>
    </source>
</evidence>
<evidence type="ECO:0000305" key="2"/>
<accession>Q7M9U3</accession>
<name>TRUA_WOLSU</name>
<feature type="chain" id="PRO_0000057490" description="tRNA pseudouridine synthase A">
    <location>
        <begin position="1"/>
        <end position="253"/>
    </location>
</feature>
<feature type="active site" description="Nucleophile" evidence="1">
    <location>
        <position position="51"/>
    </location>
</feature>
<feature type="binding site" evidence="1">
    <location>
        <position position="110"/>
    </location>
    <ligand>
        <name>substrate</name>
    </ligand>
</feature>
<protein>
    <recommendedName>
        <fullName evidence="1">tRNA pseudouridine synthase A</fullName>
        <ecNumber evidence="1">5.4.99.12</ecNumber>
    </recommendedName>
    <alternativeName>
        <fullName evidence="1">tRNA pseudouridine(38-40) synthase</fullName>
    </alternativeName>
    <alternativeName>
        <fullName evidence="1">tRNA pseudouridylate synthase I</fullName>
    </alternativeName>
    <alternativeName>
        <fullName evidence="1">tRNA-uridine isomerase I</fullName>
    </alternativeName>
</protein>
<sequence length="253" mass="29777">MPTLLAFLEYDGSAFFGSQIQKEEPSVALALQRGLKSMGIASKVRFSGRTDRGVHATRQAVSFEVPYKKSDWGYFKEELNKKLFPYLRVRRLYPIREGLDPRFEAKSRAYRYLLSEEPLSAFASRYVTHAHLGDERKIQEAMKLLVGWHDFALFKKSGSQEKSTLREMRRCWLYRYRSYWVFYFEANGFLRLQIRLLVGALLKVGRGEMSLEEFKEQLEAKRRFFCEGAPPYGLYLCKVSFESSIWEVRDRNH</sequence>
<organism>
    <name type="scientific">Wolinella succinogenes (strain ATCC 29543 / DSM 1740 / CCUG 13145 / JCM 31913 / LMG 7466 / NCTC 11488 / FDC 602W)</name>
    <name type="common">Vibrio succinogenes</name>
    <dbReference type="NCBI Taxonomy" id="273121"/>
    <lineage>
        <taxon>Bacteria</taxon>
        <taxon>Pseudomonadati</taxon>
        <taxon>Campylobacterota</taxon>
        <taxon>Epsilonproteobacteria</taxon>
        <taxon>Campylobacterales</taxon>
        <taxon>Helicobacteraceae</taxon>
        <taxon>Wolinella</taxon>
    </lineage>
</organism>
<comment type="function">
    <text evidence="1">Formation of pseudouridine at positions 38, 39 and 40 in the anticodon stem and loop of transfer RNAs.</text>
</comment>
<comment type="catalytic activity">
    <reaction evidence="1">
        <text>uridine(38/39/40) in tRNA = pseudouridine(38/39/40) in tRNA</text>
        <dbReference type="Rhea" id="RHEA:22376"/>
        <dbReference type="Rhea" id="RHEA-COMP:10085"/>
        <dbReference type="Rhea" id="RHEA-COMP:10087"/>
        <dbReference type="ChEBI" id="CHEBI:65314"/>
        <dbReference type="ChEBI" id="CHEBI:65315"/>
        <dbReference type="EC" id="5.4.99.12"/>
    </reaction>
</comment>
<comment type="subunit">
    <text evidence="1">Homodimer.</text>
</comment>
<comment type="similarity">
    <text evidence="1">Belongs to the tRNA pseudouridine synthase TruA family.</text>
</comment>
<comment type="sequence caution" evidence="2">
    <conflict type="erroneous initiation">
        <sequence resource="EMBL-CDS" id="CAE09804"/>
    </conflict>
</comment>